<evidence type="ECO:0000255" key="1">
    <source>
        <dbReference type="HAMAP-Rule" id="MF_01350"/>
    </source>
</evidence>
<organism>
    <name type="scientific">Escherichia coli O7:K1 (strain IAI39 / ExPEC)</name>
    <dbReference type="NCBI Taxonomy" id="585057"/>
    <lineage>
        <taxon>Bacteria</taxon>
        <taxon>Pseudomonadati</taxon>
        <taxon>Pseudomonadota</taxon>
        <taxon>Gammaproteobacteria</taxon>
        <taxon>Enterobacterales</taxon>
        <taxon>Enterobacteriaceae</taxon>
        <taxon>Escherichia</taxon>
    </lineage>
</organism>
<gene>
    <name evidence="1" type="primary">nuoH</name>
    <name type="ordered locus">ECIAI39_2429</name>
</gene>
<keyword id="KW-0997">Cell inner membrane</keyword>
<keyword id="KW-1003">Cell membrane</keyword>
<keyword id="KW-0472">Membrane</keyword>
<keyword id="KW-0520">NAD</keyword>
<keyword id="KW-0874">Quinone</keyword>
<keyword id="KW-1278">Translocase</keyword>
<keyword id="KW-0812">Transmembrane</keyword>
<keyword id="KW-1133">Transmembrane helix</keyword>
<keyword id="KW-0830">Ubiquinone</keyword>
<sequence length="325" mass="36233">MSWITPELIEILLTILKAVVILLVVVTCGAFMSFGERRLLGLFQNRYGPNRVGWGGSLQLVADMIKMFFKEDWIPKFSDRVIFTLAPMIAFTSLLLAFAIVPVSPGWVVADLNIGILFFLMMAGLAVYAVLFAGWSSNNKYSLLGAMRASAQTLSYEVFLGLSLMGVVAQAGSFNMTDIVNSQAHVWNVIPQFFGFITFAIAGVAVCHRHPFDQPEAEQELADGYHIEYSGMKFGLFFVGEYIGIVTISALMVTLFFGGWQGPLLPPFIWFALKTAFFMMMFILIRASLPRPRYDQVMSFGWKICLPLTLINLLVTAAVILWQAQ</sequence>
<feature type="chain" id="PRO_1000143592" description="NADH-quinone oxidoreductase subunit H">
    <location>
        <begin position="1"/>
        <end position="325"/>
    </location>
</feature>
<feature type="transmembrane region" description="Helical" evidence="1">
    <location>
        <begin position="11"/>
        <end position="31"/>
    </location>
</feature>
<feature type="transmembrane region" description="Helical" evidence="1">
    <location>
        <begin position="81"/>
        <end position="101"/>
    </location>
</feature>
<feature type="transmembrane region" description="Helical" evidence="1">
    <location>
        <begin position="114"/>
        <end position="134"/>
    </location>
</feature>
<feature type="transmembrane region" description="Helical" evidence="1">
    <location>
        <begin position="154"/>
        <end position="174"/>
    </location>
</feature>
<feature type="transmembrane region" description="Helical" evidence="1">
    <location>
        <begin position="186"/>
        <end position="206"/>
    </location>
</feature>
<feature type="transmembrane region" description="Helical" evidence="1">
    <location>
        <begin position="237"/>
        <end position="257"/>
    </location>
</feature>
<feature type="transmembrane region" description="Helical" evidence="1">
    <location>
        <begin position="265"/>
        <end position="285"/>
    </location>
</feature>
<feature type="transmembrane region" description="Helical" evidence="1">
    <location>
        <begin position="304"/>
        <end position="324"/>
    </location>
</feature>
<reference key="1">
    <citation type="journal article" date="2009" name="PLoS Genet.">
        <title>Organised genome dynamics in the Escherichia coli species results in highly diverse adaptive paths.</title>
        <authorList>
            <person name="Touchon M."/>
            <person name="Hoede C."/>
            <person name="Tenaillon O."/>
            <person name="Barbe V."/>
            <person name="Baeriswyl S."/>
            <person name="Bidet P."/>
            <person name="Bingen E."/>
            <person name="Bonacorsi S."/>
            <person name="Bouchier C."/>
            <person name="Bouvet O."/>
            <person name="Calteau A."/>
            <person name="Chiapello H."/>
            <person name="Clermont O."/>
            <person name="Cruveiller S."/>
            <person name="Danchin A."/>
            <person name="Diard M."/>
            <person name="Dossat C."/>
            <person name="Karoui M.E."/>
            <person name="Frapy E."/>
            <person name="Garry L."/>
            <person name="Ghigo J.M."/>
            <person name="Gilles A.M."/>
            <person name="Johnson J."/>
            <person name="Le Bouguenec C."/>
            <person name="Lescat M."/>
            <person name="Mangenot S."/>
            <person name="Martinez-Jehanne V."/>
            <person name="Matic I."/>
            <person name="Nassif X."/>
            <person name="Oztas S."/>
            <person name="Petit M.A."/>
            <person name="Pichon C."/>
            <person name="Rouy Z."/>
            <person name="Ruf C.S."/>
            <person name="Schneider D."/>
            <person name="Tourret J."/>
            <person name="Vacherie B."/>
            <person name="Vallenet D."/>
            <person name="Medigue C."/>
            <person name="Rocha E.P.C."/>
            <person name="Denamur E."/>
        </authorList>
    </citation>
    <scope>NUCLEOTIDE SEQUENCE [LARGE SCALE GENOMIC DNA]</scope>
    <source>
        <strain>IAI39 / ExPEC</strain>
    </source>
</reference>
<protein>
    <recommendedName>
        <fullName evidence="1">NADH-quinone oxidoreductase subunit H</fullName>
        <ecNumber evidence="1">7.1.1.-</ecNumber>
    </recommendedName>
    <alternativeName>
        <fullName evidence="1">NADH dehydrogenase I subunit H</fullName>
    </alternativeName>
    <alternativeName>
        <fullName evidence="1">NDH-1 subunit H</fullName>
    </alternativeName>
</protein>
<dbReference type="EC" id="7.1.1.-" evidence="1"/>
<dbReference type="EMBL" id="CU928164">
    <property type="protein sequence ID" value="CAR18555.1"/>
    <property type="molecule type" value="Genomic_DNA"/>
</dbReference>
<dbReference type="RefSeq" id="WP_000118519.1">
    <property type="nucleotide sequence ID" value="NC_011750.1"/>
</dbReference>
<dbReference type="RefSeq" id="YP_002408385.1">
    <property type="nucleotide sequence ID" value="NC_011750.1"/>
</dbReference>
<dbReference type="SMR" id="B7NNW1"/>
<dbReference type="STRING" id="585057.ECIAI39_2429"/>
<dbReference type="KEGG" id="ect:ECIAI39_2429"/>
<dbReference type="PATRIC" id="fig|585057.6.peg.2531"/>
<dbReference type="HOGENOM" id="CLU_015134_0_1_6"/>
<dbReference type="Proteomes" id="UP000000749">
    <property type="component" value="Chromosome"/>
</dbReference>
<dbReference type="GO" id="GO:0005886">
    <property type="term" value="C:plasma membrane"/>
    <property type="evidence" value="ECO:0007669"/>
    <property type="project" value="UniProtKB-SubCell"/>
</dbReference>
<dbReference type="GO" id="GO:0003954">
    <property type="term" value="F:NADH dehydrogenase activity"/>
    <property type="evidence" value="ECO:0007669"/>
    <property type="project" value="TreeGrafter"/>
</dbReference>
<dbReference type="GO" id="GO:0016655">
    <property type="term" value="F:oxidoreductase activity, acting on NAD(P)H, quinone or similar compound as acceptor"/>
    <property type="evidence" value="ECO:0007669"/>
    <property type="project" value="UniProtKB-UniRule"/>
</dbReference>
<dbReference type="GO" id="GO:0048038">
    <property type="term" value="F:quinone binding"/>
    <property type="evidence" value="ECO:0007669"/>
    <property type="project" value="UniProtKB-KW"/>
</dbReference>
<dbReference type="GO" id="GO:0009060">
    <property type="term" value="P:aerobic respiration"/>
    <property type="evidence" value="ECO:0007669"/>
    <property type="project" value="TreeGrafter"/>
</dbReference>
<dbReference type="HAMAP" id="MF_01350">
    <property type="entry name" value="NDH1_NuoH"/>
    <property type="match status" value="1"/>
</dbReference>
<dbReference type="InterPro" id="IPR001694">
    <property type="entry name" value="NADH_UbQ_OxRdtase_su1/FPO"/>
</dbReference>
<dbReference type="InterPro" id="IPR018086">
    <property type="entry name" value="NADH_UbQ_OxRdtase_su1_CS"/>
</dbReference>
<dbReference type="NCBIfam" id="NF004740">
    <property type="entry name" value="PRK06076.1-1"/>
    <property type="match status" value="1"/>
</dbReference>
<dbReference type="NCBIfam" id="NF004741">
    <property type="entry name" value="PRK06076.1-2"/>
    <property type="match status" value="1"/>
</dbReference>
<dbReference type="PANTHER" id="PTHR11432">
    <property type="entry name" value="NADH DEHYDROGENASE SUBUNIT 1"/>
    <property type="match status" value="1"/>
</dbReference>
<dbReference type="PANTHER" id="PTHR11432:SF3">
    <property type="entry name" value="NADH-UBIQUINONE OXIDOREDUCTASE CHAIN 1"/>
    <property type="match status" value="1"/>
</dbReference>
<dbReference type="Pfam" id="PF00146">
    <property type="entry name" value="NADHdh"/>
    <property type="match status" value="1"/>
</dbReference>
<dbReference type="PROSITE" id="PS00667">
    <property type="entry name" value="COMPLEX1_ND1_1"/>
    <property type="match status" value="1"/>
</dbReference>
<dbReference type="PROSITE" id="PS00668">
    <property type="entry name" value="COMPLEX1_ND1_2"/>
    <property type="match status" value="1"/>
</dbReference>
<comment type="function">
    <text evidence="1">NDH-1 shuttles electrons from NADH, via FMN and iron-sulfur (Fe-S) centers, to quinones in the respiratory chain. The immediate electron acceptor for the enzyme in this species is believed to be ubiquinone. Couples the redox reaction to proton translocation (for every two electrons transferred, four hydrogen ions are translocated across the cytoplasmic membrane), and thus conserves the redox energy in a proton gradient. This subunit may bind ubiquinone.</text>
</comment>
<comment type="catalytic activity">
    <reaction evidence="1">
        <text>a quinone + NADH + 5 H(+)(in) = a quinol + NAD(+) + 4 H(+)(out)</text>
        <dbReference type="Rhea" id="RHEA:57888"/>
        <dbReference type="ChEBI" id="CHEBI:15378"/>
        <dbReference type="ChEBI" id="CHEBI:24646"/>
        <dbReference type="ChEBI" id="CHEBI:57540"/>
        <dbReference type="ChEBI" id="CHEBI:57945"/>
        <dbReference type="ChEBI" id="CHEBI:132124"/>
    </reaction>
</comment>
<comment type="subunit">
    <text evidence="1">NDH-1 is composed of 13 different subunits. Subunits NuoA, H, J, K, L, M, N constitute the membrane sector of the complex.</text>
</comment>
<comment type="subcellular location">
    <subcellularLocation>
        <location evidence="1">Cell inner membrane</location>
        <topology evidence="1">Multi-pass membrane protein</topology>
    </subcellularLocation>
</comment>
<comment type="similarity">
    <text evidence="1">Belongs to the complex I subunit 1 family.</text>
</comment>
<proteinExistence type="inferred from homology"/>
<name>NUOH_ECO7I</name>
<accession>B7NNW1</accession>